<feature type="chain" id="PRO_1000141901" description="Large ribosomal subunit protein uL3">
    <location>
        <begin position="1"/>
        <end position="209"/>
    </location>
</feature>
<feature type="region of interest" description="Disordered" evidence="2">
    <location>
        <begin position="128"/>
        <end position="156"/>
    </location>
</feature>
<keyword id="KW-0687">Ribonucleoprotein</keyword>
<keyword id="KW-0689">Ribosomal protein</keyword>
<keyword id="KW-0694">RNA-binding</keyword>
<keyword id="KW-0699">rRNA-binding</keyword>
<accession>B4S5M7</accession>
<comment type="function">
    <text evidence="1">One of the primary rRNA binding proteins, it binds directly near the 3'-end of the 23S rRNA, where it nucleates assembly of the 50S subunit.</text>
</comment>
<comment type="subunit">
    <text evidence="1">Part of the 50S ribosomal subunit. Forms a cluster with proteins L14 and L19.</text>
</comment>
<comment type="similarity">
    <text evidence="1">Belongs to the universal ribosomal protein uL3 family.</text>
</comment>
<protein>
    <recommendedName>
        <fullName evidence="1">Large ribosomal subunit protein uL3</fullName>
    </recommendedName>
    <alternativeName>
        <fullName evidence="3">50S ribosomal protein L3</fullName>
    </alternativeName>
</protein>
<proteinExistence type="inferred from homology"/>
<organism>
    <name type="scientific">Prosthecochloris aestuarii (strain DSM 271 / SK 413)</name>
    <dbReference type="NCBI Taxonomy" id="290512"/>
    <lineage>
        <taxon>Bacteria</taxon>
        <taxon>Pseudomonadati</taxon>
        <taxon>Chlorobiota</taxon>
        <taxon>Chlorobiia</taxon>
        <taxon>Chlorobiales</taxon>
        <taxon>Chlorobiaceae</taxon>
        <taxon>Prosthecochloris</taxon>
    </lineage>
</organism>
<dbReference type="EMBL" id="CP001108">
    <property type="protein sequence ID" value="ACF47074.1"/>
    <property type="molecule type" value="Genomic_DNA"/>
</dbReference>
<dbReference type="RefSeq" id="WP_012506606.1">
    <property type="nucleotide sequence ID" value="NC_011059.1"/>
</dbReference>
<dbReference type="SMR" id="B4S5M7"/>
<dbReference type="STRING" id="290512.Paes_2064"/>
<dbReference type="KEGG" id="paa:Paes_2064"/>
<dbReference type="eggNOG" id="COG0087">
    <property type="taxonomic scope" value="Bacteria"/>
</dbReference>
<dbReference type="HOGENOM" id="CLU_044142_4_1_10"/>
<dbReference type="Proteomes" id="UP000002725">
    <property type="component" value="Chromosome"/>
</dbReference>
<dbReference type="GO" id="GO:0022625">
    <property type="term" value="C:cytosolic large ribosomal subunit"/>
    <property type="evidence" value="ECO:0007669"/>
    <property type="project" value="TreeGrafter"/>
</dbReference>
<dbReference type="GO" id="GO:0019843">
    <property type="term" value="F:rRNA binding"/>
    <property type="evidence" value="ECO:0007669"/>
    <property type="project" value="UniProtKB-UniRule"/>
</dbReference>
<dbReference type="GO" id="GO:0003735">
    <property type="term" value="F:structural constituent of ribosome"/>
    <property type="evidence" value="ECO:0007669"/>
    <property type="project" value="InterPro"/>
</dbReference>
<dbReference type="GO" id="GO:0006412">
    <property type="term" value="P:translation"/>
    <property type="evidence" value="ECO:0007669"/>
    <property type="project" value="UniProtKB-UniRule"/>
</dbReference>
<dbReference type="FunFam" id="2.40.30.10:FF:000004">
    <property type="entry name" value="50S ribosomal protein L3"/>
    <property type="match status" value="1"/>
</dbReference>
<dbReference type="FunFam" id="3.30.160.810:FF:000001">
    <property type="entry name" value="50S ribosomal protein L3"/>
    <property type="match status" value="1"/>
</dbReference>
<dbReference type="Gene3D" id="3.30.160.810">
    <property type="match status" value="1"/>
</dbReference>
<dbReference type="Gene3D" id="2.40.30.10">
    <property type="entry name" value="Translation factors"/>
    <property type="match status" value="1"/>
</dbReference>
<dbReference type="HAMAP" id="MF_01325_B">
    <property type="entry name" value="Ribosomal_uL3_B"/>
    <property type="match status" value="1"/>
</dbReference>
<dbReference type="InterPro" id="IPR000597">
    <property type="entry name" value="Ribosomal_uL3"/>
</dbReference>
<dbReference type="InterPro" id="IPR019927">
    <property type="entry name" value="Ribosomal_uL3_bac/org-type"/>
</dbReference>
<dbReference type="InterPro" id="IPR019926">
    <property type="entry name" value="Ribosomal_uL3_CS"/>
</dbReference>
<dbReference type="InterPro" id="IPR009000">
    <property type="entry name" value="Transl_B-barrel_sf"/>
</dbReference>
<dbReference type="NCBIfam" id="TIGR03625">
    <property type="entry name" value="L3_bact"/>
    <property type="match status" value="1"/>
</dbReference>
<dbReference type="PANTHER" id="PTHR11229">
    <property type="entry name" value="50S RIBOSOMAL PROTEIN L3"/>
    <property type="match status" value="1"/>
</dbReference>
<dbReference type="PANTHER" id="PTHR11229:SF16">
    <property type="entry name" value="LARGE RIBOSOMAL SUBUNIT PROTEIN UL3C"/>
    <property type="match status" value="1"/>
</dbReference>
<dbReference type="Pfam" id="PF00297">
    <property type="entry name" value="Ribosomal_L3"/>
    <property type="match status" value="1"/>
</dbReference>
<dbReference type="SUPFAM" id="SSF50447">
    <property type="entry name" value="Translation proteins"/>
    <property type="match status" value="1"/>
</dbReference>
<dbReference type="PROSITE" id="PS00474">
    <property type="entry name" value="RIBOSOMAL_L3"/>
    <property type="match status" value="1"/>
</dbReference>
<reference key="1">
    <citation type="submission" date="2008-06" db="EMBL/GenBank/DDBJ databases">
        <title>Complete sequence of chromosome of Prosthecochloris aestuarii DSM 271.</title>
        <authorList>
            <consortium name="US DOE Joint Genome Institute"/>
            <person name="Lucas S."/>
            <person name="Copeland A."/>
            <person name="Lapidus A."/>
            <person name="Glavina del Rio T."/>
            <person name="Dalin E."/>
            <person name="Tice H."/>
            <person name="Bruce D."/>
            <person name="Goodwin L."/>
            <person name="Pitluck S."/>
            <person name="Schmutz J."/>
            <person name="Larimer F."/>
            <person name="Land M."/>
            <person name="Hauser L."/>
            <person name="Kyrpides N."/>
            <person name="Anderson I."/>
            <person name="Liu Z."/>
            <person name="Li T."/>
            <person name="Zhao F."/>
            <person name="Overmann J."/>
            <person name="Bryant D.A."/>
            <person name="Richardson P."/>
        </authorList>
    </citation>
    <scope>NUCLEOTIDE SEQUENCE [LARGE SCALE GENOMIC DNA]</scope>
    <source>
        <strain>DSM 271 / SK 413</strain>
    </source>
</reference>
<sequence length="209" mass="22509">MAAILGKKIGMTRIYNEKREAVPCTVIQAAPCFVSQVKTSDNDGYEAYQLSIGERKEAKVSKPMRGHYAKAGITPGYKIAEFGKDLMDADLELGSSVSVDMFKEGDKVDVRGVTKGKGFAGVVKRHNFAGGSRTHGQSDRLRAPGSVGGSSDPSRTFKGMRMAGRMGSKNVKVRGLQIVKIIPESNLLVIKGSVPGVKNSYVEIVTRNK</sequence>
<evidence type="ECO:0000255" key="1">
    <source>
        <dbReference type="HAMAP-Rule" id="MF_01325"/>
    </source>
</evidence>
<evidence type="ECO:0000256" key="2">
    <source>
        <dbReference type="SAM" id="MobiDB-lite"/>
    </source>
</evidence>
<evidence type="ECO:0000305" key="3"/>
<name>RL3_PROA2</name>
<gene>
    <name evidence="1" type="primary">rplC</name>
    <name type="ordered locus">Paes_2064</name>
</gene>